<sequence length="237" mass="26207">MMVYIMNAFDIKSTKMDVLSISLHTSDLFDLEDVLVKLGKKFQESGVVPFVLDVQEFDYPESLDLAALVSLFSRHGMQILGLKHSNERWAAAAMKYHLLFCLSHSENVKELGQVEVQNTEDGQKARKTVLITSPVRTGQQVYAEDGDLIVTGAVSQGAELIADGNIHIYAPMRGRALAGAKGDTSARIFIHSMQAELVSVAGIYRNFEQDLPNHLHKQPVQILLQDNRLVISAIGSE</sequence>
<organism>
    <name type="scientific">Neisseria meningitidis serogroup A / serotype 4A (strain DSM 15465 / Z2491)</name>
    <dbReference type="NCBI Taxonomy" id="122587"/>
    <lineage>
        <taxon>Bacteria</taxon>
        <taxon>Pseudomonadati</taxon>
        <taxon>Pseudomonadota</taxon>
        <taxon>Betaproteobacteria</taxon>
        <taxon>Neisseriales</taxon>
        <taxon>Neisseriaceae</taxon>
        <taxon>Neisseria</taxon>
    </lineage>
</organism>
<dbReference type="EMBL" id="AL157959">
    <property type="protein sequence ID" value="CAM07419.1"/>
    <property type="molecule type" value="Genomic_DNA"/>
</dbReference>
<dbReference type="PIR" id="C82002">
    <property type="entry name" value="C82002"/>
</dbReference>
<dbReference type="RefSeq" id="WP_002220172.1">
    <property type="nucleotide sequence ID" value="NC_003116.1"/>
</dbReference>
<dbReference type="SMR" id="Q9JX17"/>
<dbReference type="EnsemblBacteria" id="CAM07419">
    <property type="protein sequence ID" value="CAM07419"/>
    <property type="gene ID" value="NMA0101"/>
</dbReference>
<dbReference type="GeneID" id="93387245"/>
<dbReference type="KEGG" id="nma:NMA0101"/>
<dbReference type="HOGENOM" id="CLU_067812_0_0_4"/>
<dbReference type="Proteomes" id="UP000000626">
    <property type="component" value="Chromosome"/>
</dbReference>
<dbReference type="GO" id="GO:0000902">
    <property type="term" value="P:cell morphogenesis"/>
    <property type="evidence" value="ECO:0007669"/>
    <property type="project" value="InterPro"/>
</dbReference>
<dbReference type="GO" id="GO:0000917">
    <property type="term" value="P:division septum assembly"/>
    <property type="evidence" value="ECO:0007669"/>
    <property type="project" value="UniProtKB-KW"/>
</dbReference>
<dbReference type="GO" id="GO:0051302">
    <property type="term" value="P:regulation of cell division"/>
    <property type="evidence" value="ECO:0007669"/>
    <property type="project" value="InterPro"/>
</dbReference>
<dbReference type="GO" id="GO:1901891">
    <property type="term" value="P:regulation of cell septum assembly"/>
    <property type="evidence" value="ECO:0007669"/>
    <property type="project" value="InterPro"/>
</dbReference>
<dbReference type="Gene3D" id="2.160.20.70">
    <property type="match status" value="1"/>
</dbReference>
<dbReference type="Gene3D" id="3.30.70.260">
    <property type="match status" value="1"/>
</dbReference>
<dbReference type="HAMAP" id="MF_00267">
    <property type="entry name" value="MinC"/>
    <property type="match status" value="1"/>
</dbReference>
<dbReference type="InterPro" id="IPR016098">
    <property type="entry name" value="CAP/MinC_C"/>
</dbReference>
<dbReference type="InterPro" id="IPR013033">
    <property type="entry name" value="MinC"/>
</dbReference>
<dbReference type="InterPro" id="IPR036145">
    <property type="entry name" value="MinC_C_sf"/>
</dbReference>
<dbReference type="InterPro" id="IPR007874">
    <property type="entry name" value="MinC_N"/>
</dbReference>
<dbReference type="InterPro" id="IPR005526">
    <property type="entry name" value="Septum_form_inhib_MinC_C"/>
</dbReference>
<dbReference type="NCBIfam" id="TIGR01222">
    <property type="entry name" value="minC"/>
    <property type="match status" value="1"/>
</dbReference>
<dbReference type="PANTHER" id="PTHR34108">
    <property type="entry name" value="SEPTUM SITE-DETERMINING PROTEIN MINC"/>
    <property type="match status" value="1"/>
</dbReference>
<dbReference type="PANTHER" id="PTHR34108:SF1">
    <property type="entry name" value="SEPTUM SITE-DETERMINING PROTEIN MINC"/>
    <property type="match status" value="1"/>
</dbReference>
<dbReference type="Pfam" id="PF03775">
    <property type="entry name" value="MinC_C"/>
    <property type="match status" value="1"/>
</dbReference>
<dbReference type="Pfam" id="PF05209">
    <property type="entry name" value="MinC_N"/>
    <property type="match status" value="1"/>
</dbReference>
<dbReference type="SUPFAM" id="SSF63848">
    <property type="entry name" value="Cell-division inhibitor MinC, C-terminal domain"/>
    <property type="match status" value="1"/>
</dbReference>
<proteinExistence type="inferred from homology"/>
<accession>Q9JX17</accession>
<accession>A1INW2</accession>
<feature type="chain" id="PRO_0000189045" description="Probable septum site-determining protein MinC">
    <location>
        <begin position="1"/>
        <end position="237"/>
    </location>
</feature>
<reference key="1">
    <citation type="journal article" date="2000" name="Nature">
        <title>Complete DNA sequence of a serogroup A strain of Neisseria meningitidis Z2491.</title>
        <authorList>
            <person name="Parkhill J."/>
            <person name="Achtman M."/>
            <person name="James K.D."/>
            <person name="Bentley S.D."/>
            <person name="Churcher C.M."/>
            <person name="Klee S.R."/>
            <person name="Morelli G."/>
            <person name="Basham D."/>
            <person name="Brown D."/>
            <person name="Chillingworth T."/>
            <person name="Davies R.M."/>
            <person name="Davis P."/>
            <person name="Devlin K."/>
            <person name="Feltwell T."/>
            <person name="Hamlin N."/>
            <person name="Holroyd S."/>
            <person name="Jagels K."/>
            <person name="Leather S."/>
            <person name="Moule S."/>
            <person name="Mungall K.L."/>
            <person name="Quail M.A."/>
            <person name="Rajandream M.A."/>
            <person name="Rutherford K.M."/>
            <person name="Simmonds M."/>
            <person name="Skelton J."/>
            <person name="Whitehead S."/>
            <person name="Spratt B.G."/>
            <person name="Barrell B.G."/>
        </authorList>
    </citation>
    <scope>NUCLEOTIDE SEQUENCE [LARGE SCALE GENOMIC DNA]</scope>
    <source>
        <strain>DSM 15465 / Z2491</strain>
    </source>
</reference>
<protein>
    <recommendedName>
        <fullName>Probable septum site-determining protein MinC</fullName>
    </recommendedName>
</protein>
<evidence type="ECO:0000250" key="1"/>
<evidence type="ECO:0000305" key="2"/>
<keyword id="KW-0131">Cell cycle</keyword>
<keyword id="KW-0132">Cell division</keyword>
<keyword id="KW-0717">Septation</keyword>
<name>MINC_NEIMA</name>
<gene>
    <name type="primary">minC</name>
    <name type="ordered locus">NMA0101</name>
</gene>
<comment type="function">
    <text evidence="1">Cell division inhibitor that blocks the formation of polar Z ring septums. Rapidly oscillates between the poles of the cell to destabilize FtsZ filaments that have formed before they mature into polar Z rings. Prevents FtsZ polymerization (By similarity).</text>
</comment>
<comment type="subunit">
    <text evidence="1">Interacts with MinD and FtsZ.</text>
</comment>
<comment type="similarity">
    <text evidence="2">Belongs to the MinC family.</text>
</comment>